<keyword id="KW-0001">2Fe-2S</keyword>
<keyword id="KW-0010">Activator</keyword>
<keyword id="KW-0238">DNA-binding</keyword>
<keyword id="KW-0408">Iron</keyword>
<keyword id="KW-0411">Iron-sulfur</keyword>
<keyword id="KW-0479">Metal-binding</keyword>
<keyword id="KW-0678">Repressor</keyword>
<keyword id="KW-0804">Transcription</keyword>
<keyword id="KW-0805">Transcription regulation</keyword>
<organism>
    <name type="scientific">Salmonella newport (strain SL254)</name>
    <dbReference type="NCBI Taxonomy" id="423368"/>
    <lineage>
        <taxon>Bacteria</taxon>
        <taxon>Pseudomonadati</taxon>
        <taxon>Pseudomonadota</taxon>
        <taxon>Gammaproteobacteria</taxon>
        <taxon>Enterobacterales</taxon>
        <taxon>Enterobacteriaceae</taxon>
        <taxon>Salmonella</taxon>
    </lineage>
</organism>
<proteinExistence type="inferred from homology"/>
<name>ISCR_SALNS</name>
<accession>B4T1C0</accession>
<protein>
    <recommendedName>
        <fullName evidence="1">HTH-type transcriptional regulator IscR</fullName>
    </recommendedName>
</protein>
<dbReference type="EMBL" id="CP001113">
    <property type="protein sequence ID" value="ACF63380.1"/>
    <property type="molecule type" value="Genomic_DNA"/>
</dbReference>
<dbReference type="RefSeq" id="WP_001241346.1">
    <property type="nucleotide sequence ID" value="NZ_CCMR01000001.1"/>
</dbReference>
<dbReference type="SMR" id="B4T1C0"/>
<dbReference type="KEGG" id="see:SNSL254_A2744"/>
<dbReference type="HOGENOM" id="CLU_107144_0_0_6"/>
<dbReference type="Proteomes" id="UP000008824">
    <property type="component" value="Chromosome"/>
</dbReference>
<dbReference type="GO" id="GO:0005829">
    <property type="term" value="C:cytosol"/>
    <property type="evidence" value="ECO:0007669"/>
    <property type="project" value="TreeGrafter"/>
</dbReference>
<dbReference type="GO" id="GO:0051537">
    <property type="term" value="F:2 iron, 2 sulfur cluster binding"/>
    <property type="evidence" value="ECO:0007669"/>
    <property type="project" value="UniProtKB-KW"/>
</dbReference>
<dbReference type="GO" id="GO:0003700">
    <property type="term" value="F:DNA-binding transcription factor activity"/>
    <property type="evidence" value="ECO:0007669"/>
    <property type="project" value="UniProtKB-UniRule"/>
</dbReference>
<dbReference type="GO" id="GO:0003690">
    <property type="term" value="F:double-stranded DNA binding"/>
    <property type="evidence" value="ECO:0007669"/>
    <property type="project" value="UniProtKB-UniRule"/>
</dbReference>
<dbReference type="GO" id="GO:0005506">
    <property type="term" value="F:iron ion binding"/>
    <property type="evidence" value="ECO:0007669"/>
    <property type="project" value="UniProtKB-UniRule"/>
</dbReference>
<dbReference type="FunFam" id="1.10.10.10:FF:000026">
    <property type="entry name" value="HTH-type transcriptional regulator IscR"/>
    <property type="match status" value="1"/>
</dbReference>
<dbReference type="Gene3D" id="1.10.10.10">
    <property type="entry name" value="Winged helix-like DNA-binding domain superfamily/Winged helix DNA-binding domain"/>
    <property type="match status" value="1"/>
</dbReference>
<dbReference type="HAMAP" id="MF_01176">
    <property type="entry name" value="HTH_type_IscR"/>
    <property type="match status" value="1"/>
</dbReference>
<dbReference type="InterPro" id="IPR010242">
    <property type="entry name" value="TF_HTH_IscR"/>
</dbReference>
<dbReference type="InterPro" id="IPR030489">
    <property type="entry name" value="TR_Rrf2-type_CS"/>
</dbReference>
<dbReference type="InterPro" id="IPR000944">
    <property type="entry name" value="Tscrpt_reg_Rrf2"/>
</dbReference>
<dbReference type="InterPro" id="IPR036388">
    <property type="entry name" value="WH-like_DNA-bd_sf"/>
</dbReference>
<dbReference type="InterPro" id="IPR036390">
    <property type="entry name" value="WH_DNA-bd_sf"/>
</dbReference>
<dbReference type="NCBIfam" id="TIGR02010">
    <property type="entry name" value="IscR"/>
    <property type="match status" value="1"/>
</dbReference>
<dbReference type="NCBIfam" id="NF008110">
    <property type="entry name" value="PRK10857.1"/>
    <property type="match status" value="1"/>
</dbReference>
<dbReference type="NCBIfam" id="TIGR00738">
    <property type="entry name" value="rrf2_super"/>
    <property type="match status" value="1"/>
</dbReference>
<dbReference type="PANTHER" id="PTHR33221:SF5">
    <property type="entry name" value="HTH-TYPE TRANSCRIPTIONAL REGULATOR ISCR"/>
    <property type="match status" value="1"/>
</dbReference>
<dbReference type="PANTHER" id="PTHR33221">
    <property type="entry name" value="WINGED HELIX-TURN-HELIX TRANSCRIPTIONAL REGULATOR, RRF2 FAMILY"/>
    <property type="match status" value="1"/>
</dbReference>
<dbReference type="Pfam" id="PF02082">
    <property type="entry name" value="Rrf2"/>
    <property type="match status" value="1"/>
</dbReference>
<dbReference type="SUPFAM" id="SSF46785">
    <property type="entry name" value="Winged helix' DNA-binding domain"/>
    <property type="match status" value="1"/>
</dbReference>
<dbReference type="PROSITE" id="PS01332">
    <property type="entry name" value="HTH_RRF2_1"/>
    <property type="match status" value="1"/>
</dbReference>
<dbReference type="PROSITE" id="PS51197">
    <property type="entry name" value="HTH_RRF2_2"/>
    <property type="match status" value="1"/>
</dbReference>
<evidence type="ECO:0000255" key="1">
    <source>
        <dbReference type="HAMAP-Rule" id="MF_01176"/>
    </source>
</evidence>
<feature type="chain" id="PRO_1000138109" description="HTH-type transcriptional regulator IscR">
    <location>
        <begin position="1"/>
        <end position="164"/>
    </location>
</feature>
<feature type="domain" description="HTH rrf2-type" evidence="1">
    <location>
        <begin position="2"/>
        <end position="131"/>
    </location>
</feature>
<feature type="DNA-binding region" description="H-T-H motif" evidence="1">
    <location>
        <begin position="28"/>
        <end position="51"/>
    </location>
</feature>
<feature type="binding site" evidence="1">
    <location>
        <position position="92"/>
    </location>
    <ligand>
        <name>[2Fe-2S] cluster</name>
        <dbReference type="ChEBI" id="CHEBI:190135"/>
    </ligand>
</feature>
<feature type="binding site" evidence="1">
    <location>
        <position position="98"/>
    </location>
    <ligand>
        <name>[2Fe-2S] cluster</name>
        <dbReference type="ChEBI" id="CHEBI:190135"/>
    </ligand>
</feature>
<feature type="binding site" evidence="1">
    <location>
        <position position="104"/>
    </location>
    <ligand>
        <name>[2Fe-2S] cluster</name>
        <dbReference type="ChEBI" id="CHEBI:190135"/>
    </ligand>
</feature>
<gene>
    <name evidence="1" type="primary">iscR</name>
    <name type="ordered locus">SNSL254_A2744</name>
</gene>
<sequence length="164" mass="17391">MRLTSKGRYAVTAMLDVALNSEAGPVPLADISERQGISLSYLEQLFSRLRKNGLVSSVRGPGGGYLLGKDAGSIAVGEVISAVDESVDATRCQGKGGCQGGDKCLTHALWRDLSDRLTGFLNNITLGELVNNQEVLDVSGRQHTHDAPRASGRAQDAIDVKLRA</sequence>
<comment type="function">
    <text evidence="1">Regulates the transcription of several operons and genes involved in the biogenesis of Fe-S clusters and Fe-S-containing proteins.</text>
</comment>
<comment type="cofactor">
    <cofactor evidence="1">
        <name>[2Fe-2S] cluster</name>
        <dbReference type="ChEBI" id="CHEBI:190135"/>
    </cofactor>
    <text evidence="1">Binds 1 [2Fe-2S] cluster.</text>
</comment>
<reference key="1">
    <citation type="journal article" date="2011" name="J. Bacteriol.">
        <title>Comparative genomics of 28 Salmonella enterica isolates: evidence for CRISPR-mediated adaptive sublineage evolution.</title>
        <authorList>
            <person name="Fricke W.F."/>
            <person name="Mammel M.K."/>
            <person name="McDermott P.F."/>
            <person name="Tartera C."/>
            <person name="White D.G."/>
            <person name="Leclerc J.E."/>
            <person name="Ravel J."/>
            <person name="Cebula T.A."/>
        </authorList>
    </citation>
    <scope>NUCLEOTIDE SEQUENCE [LARGE SCALE GENOMIC DNA]</scope>
    <source>
        <strain>SL254</strain>
    </source>
</reference>